<feature type="initiator methionine" description="Removed" evidence="2">
    <location>
        <position position="1"/>
    </location>
</feature>
<feature type="chain" id="PRO_0000203658" description="Guanine nucleotide-binding protein alpha-17 subunit">
    <location>
        <begin position="2"/>
        <end position="356"/>
    </location>
</feature>
<feature type="domain" description="G-alpha" evidence="3">
    <location>
        <begin position="32"/>
        <end position="356"/>
    </location>
</feature>
<feature type="region of interest" description="G1 motif" evidence="3">
    <location>
        <begin position="35"/>
        <end position="48"/>
    </location>
</feature>
<feature type="region of interest" description="G2 motif" evidence="3">
    <location>
        <begin position="175"/>
        <end position="183"/>
    </location>
</feature>
<feature type="region of interest" description="G3 motif" evidence="3">
    <location>
        <begin position="198"/>
        <end position="207"/>
    </location>
</feature>
<feature type="region of interest" description="G4 motif" evidence="3">
    <location>
        <begin position="267"/>
        <end position="274"/>
    </location>
</feature>
<feature type="region of interest" description="G5 motif" evidence="3">
    <location>
        <begin position="326"/>
        <end position="331"/>
    </location>
</feature>
<feature type="binding site" evidence="1">
    <location>
        <begin position="40"/>
        <end position="47"/>
    </location>
    <ligand>
        <name>GTP</name>
        <dbReference type="ChEBI" id="CHEBI:37565"/>
    </ligand>
</feature>
<feature type="binding site" evidence="1">
    <location>
        <position position="47"/>
    </location>
    <ligand>
        <name>Mg(2+)</name>
        <dbReference type="ChEBI" id="CHEBI:18420"/>
    </ligand>
</feature>
<feature type="binding site" evidence="1">
    <location>
        <begin position="177"/>
        <end position="183"/>
    </location>
    <ligand>
        <name>GTP</name>
        <dbReference type="ChEBI" id="CHEBI:37565"/>
    </ligand>
</feature>
<feature type="binding site" evidence="1">
    <location>
        <position position="183"/>
    </location>
    <ligand>
        <name>Mg(2+)</name>
        <dbReference type="ChEBI" id="CHEBI:18420"/>
    </ligand>
</feature>
<feature type="binding site" evidence="1">
    <location>
        <begin position="202"/>
        <end position="206"/>
    </location>
    <ligand>
        <name>GTP</name>
        <dbReference type="ChEBI" id="CHEBI:37565"/>
    </ligand>
</feature>
<feature type="binding site" evidence="1">
    <location>
        <begin position="271"/>
        <end position="274"/>
    </location>
    <ligand>
        <name>GTP</name>
        <dbReference type="ChEBI" id="CHEBI:37565"/>
    </ligand>
</feature>
<feature type="binding site" evidence="1">
    <location>
        <position position="328"/>
    </location>
    <ligand>
        <name>GTP</name>
        <dbReference type="ChEBI" id="CHEBI:37565"/>
    </ligand>
</feature>
<feature type="lipid moiety-binding region" description="N-myristoyl glycine" evidence="2">
    <location>
        <position position="2"/>
    </location>
</feature>
<feature type="lipid moiety-binding region" description="S-palmitoyl cysteine" evidence="2">
    <location>
        <position position="4"/>
    </location>
</feature>
<protein>
    <recommendedName>
        <fullName>Guanine nucleotide-binding protein alpha-17 subunit</fullName>
    </recommendedName>
    <alternativeName>
        <fullName>Odorant response abnormal protein 3</fullName>
    </alternativeName>
</protein>
<reference key="1">
    <citation type="journal article" date="2003" name="Mol. Ecol.">
        <title>Molecular evolution and quantitative variation for chemosensory behaviour in the nematode genus Caenorhabditis.</title>
        <authorList>
            <person name="Jovelin R."/>
            <person name="Ajie B.C."/>
            <person name="Phillips P.C."/>
        </authorList>
    </citation>
    <scope>NUCLEOTIDE SEQUENCE [GENOMIC DNA]</scope>
    <source>
        <strain>AF16</strain>
        <strain>DH1300</strain>
        <strain>HK104</strain>
        <strain>VT847</strain>
    </source>
</reference>
<reference key="2">
    <citation type="journal article" date="2009" name="Genetics">
        <title>High nucleotide divergence in developmental regulatory genes contrasts with the structural elements of olfactory pathways in caenorhabditis.</title>
        <authorList>
            <person name="Jovelin R."/>
            <person name="Dunham J.P."/>
            <person name="Sung F.S."/>
            <person name="Phillips P.C."/>
        </authorList>
    </citation>
    <scope>NUCLEOTIDE SEQUENCE [GENOMIC DNA]</scope>
    <source>
        <strain>HK105</strain>
    </source>
</reference>
<reference key="3">
    <citation type="journal article" date="2003" name="PLoS Biol.">
        <title>The genome sequence of Caenorhabditis briggsae: a platform for comparative genomics.</title>
        <authorList>
            <person name="Stein L.D."/>
            <person name="Bao Z."/>
            <person name="Blasiar D."/>
            <person name="Blumenthal T."/>
            <person name="Brent M.R."/>
            <person name="Chen N."/>
            <person name="Chinwalla A."/>
            <person name="Clarke L."/>
            <person name="Clee C."/>
            <person name="Coghlan A."/>
            <person name="Coulson A."/>
            <person name="D'Eustachio P."/>
            <person name="Fitch D.H.A."/>
            <person name="Fulton L.A."/>
            <person name="Fulton R.E."/>
            <person name="Griffiths-Jones S."/>
            <person name="Harris T.W."/>
            <person name="Hillier L.W."/>
            <person name="Kamath R."/>
            <person name="Kuwabara P.E."/>
            <person name="Mardis E.R."/>
            <person name="Marra M.A."/>
            <person name="Miner T.L."/>
            <person name="Minx P."/>
            <person name="Mullikin J.C."/>
            <person name="Plumb R.W."/>
            <person name="Rogers J."/>
            <person name="Schein J.E."/>
            <person name="Sohrmann M."/>
            <person name="Spieth J."/>
            <person name="Stajich J.E."/>
            <person name="Wei C."/>
            <person name="Willey D."/>
            <person name="Wilson R.K."/>
            <person name="Durbin R.M."/>
            <person name="Waterston R.H."/>
        </authorList>
    </citation>
    <scope>NUCLEOTIDE SEQUENCE [LARGE SCALE GENOMIC DNA]</scope>
    <source>
        <strain>AF16</strain>
    </source>
</reference>
<sequence length="356" mass="40446">MGSCQSNENSEGNARNKEIEKQLNADKRAGSSIVKLLLLGAGECGKSTVLKQMQILHSNGFTEEEVNEKRAIVYNNTVSAMCTILRAMDGVLHLPLENGQKEAEKAIVMKVQENGEEGEALTEEVSRAIQSLWADPGVKKAFEMRSEYQLPDSAKYFLDNCQRISEPGYRPNDQDILYSRVATTGVVEVKFKIKELDFRVFDVGGQRSERRKWIHCFDNVESIIFITAISEYDQVLFEDETTNRMIESMQLFNSICNSTWFLSTAMILFMNKKDLFMEKIQRVNITTAFPDYEGGQNYEEAVAFIKQKFAELNLNPDKKTIYMHETCATDTNQVQLVISSVIDTIIQKNLQKAGMM</sequence>
<organism>
    <name type="scientific">Caenorhabditis briggsae</name>
    <dbReference type="NCBI Taxonomy" id="6238"/>
    <lineage>
        <taxon>Eukaryota</taxon>
        <taxon>Metazoa</taxon>
        <taxon>Ecdysozoa</taxon>
        <taxon>Nematoda</taxon>
        <taxon>Chromadorea</taxon>
        <taxon>Rhabditida</taxon>
        <taxon>Rhabditina</taxon>
        <taxon>Rhabditomorpha</taxon>
        <taxon>Rhabditoidea</taxon>
        <taxon>Rhabditidae</taxon>
        <taxon>Peloderinae</taxon>
        <taxon>Caenorhabditis</taxon>
    </lineage>
</organism>
<keyword id="KW-0966">Cell projection</keyword>
<keyword id="KW-0145">Chemotaxis</keyword>
<keyword id="KW-0969">Cilium</keyword>
<keyword id="KW-0342">GTP-binding</keyword>
<keyword id="KW-0449">Lipoprotein</keyword>
<keyword id="KW-0460">Magnesium</keyword>
<keyword id="KW-0479">Metal-binding</keyword>
<keyword id="KW-0519">Myristate</keyword>
<keyword id="KW-0547">Nucleotide-binding</keyword>
<keyword id="KW-0552">Olfaction</keyword>
<keyword id="KW-0564">Palmitate</keyword>
<keyword id="KW-1185">Reference proteome</keyword>
<keyword id="KW-0716">Sensory transduction</keyword>
<keyword id="KW-0807">Transducer</keyword>
<accession>Q86FX7</accession>
<accession>A8X960</accession>
<accession>C3U547</accession>
<accession>Q867F2</accession>
<proteinExistence type="inferred from homology"/>
<gene>
    <name type="primary">odr-3</name>
    <name type="ORF">CBG09409</name>
</gene>
<name>GPA17_CAEBR</name>
<comment type="function">
    <text evidence="1">Guanine nucleotide-binding proteins (G proteins) are involved as modulators or transducers in various transmembrane signaling systems. This specific G-alpha subunit plays an important role in olfaction and in cilia morphogenesis. Involved in chemotactic responses to attractants diacetyl, pyrazine, 2,4,5-trimethylthiazole, benzaldehyde, isoamyl alcohol, butanone and 2,3-pentanedione. Displays a redundant function with gpa-3 in chemotactic responses. Involved in avoidance responses to copper, sodium dodecyl sulfate and linoleic acid. Involved in osmotic avoidance and mechanosensory responses. Involved in specifying fan-like morphology of cilia of head sensory neurons AWC (By similarity).</text>
</comment>
<comment type="subunit">
    <text evidence="1">G proteins are composed of 3 units; alpha, beta and gamma. The alpha chain contains the guanine nucleotide binding site (By similarity).</text>
</comment>
<comment type="subcellular location">
    <subcellularLocation>
        <location evidence="1">Cell projection</location>
        <location evidence="1">Cilium</location>
    </subcellularLocation>
    <subcellularLocation>
        <location evidence="1">Cell projection</location>
        <location evidence="1">Dendrite</location>
    </subcellularLocation>
    <text evidence="1">In amphid neurons also weakly expressed in cell body. In phasmid neurons found only in cilia.</text>
</comment>
<comment type="similarity">
    <text evidence="4">Belongs to the G-alpha family.</text>
</comment>
<dbReference type="EMBL" id="AY146578">
    <property type="protein sequence ID" value="AAN78250.1"/>
    <property type="molecule type" value="Genomic_DNA"/>
</dbReference>
<dbReference type="EMBL" id="AY146579">
    <property type="protein sequence ID" value="AAN78251.1"/>
    <property type="molecule type" value="Genomic_DNA"/>
</dbReference>
<dbReference type="EMBL" id="AY146580">
    <property type="protein sequence ID" value="AAN78252.1"/>
    <property type="molecule type" value="Genomic_DNA"/>
</dbReference>
<dbReference type="EMBL" id="AY146581">
    <property type="protein sequence ID" value="AAN78253.1"/>
    <property type="molecule type" value="Genomic_DNA"/>
</dbReference>
<dbReference type="EMBL" id="FJ455732">
    <property type="protein sequence ID" value="ACQ43992.1"/>
    <property type="molecule type" value="Genomic_DNA"/>
</dbReference>
<dbReference type="EMBL" id="HE600954">
    <property type="protein sequence ID" value="CAP29172.3"/>
    <property type="molecule type" value="Genomic_DNA"/>
</dbReference>
<dbReference type="SMR" id="Q86FX7"/>
<dbReference type="FunCoup" id="Q86FX7">
    <property type="interactions" value="42"/>
</dbReference>
<dbReference type="STRING" id="6238.Q86FX7"/>
<dbReference type="EnsemblMetazoa" id="CBG09409.1">
    <property type="protein sequence ID" value="CBG09409.1"/>
    <property type="gene ID" value="WBGene00030998"/>
</dbReference>
<dbReference type="KEGG" id="cbr:CBG_09409"/>
<dbReference type="CTD" id="8578933"/>
<dbReference type="WormBase" id="CBG09409">
    <property type="protein sequence ID" value="CBP02303"/>
    <property type="gene ID" value="WBGene00030998"/>
    <property type="gene designation" value="Cbr-odr-3"/>
</dbReference>
<dbReference type="eggNOG" id="KOG0082">
    <property type="taxonomic scope" value="Eukaryota"/>
</dbReference>
<dbReference type="HOGENOM" id="CLU_014184_6_0_1"/>
<dbReference type="InParanoid" id="Q86FX7"/>
<dbReference type="OMA" id="HEPGYRP"/>
<dbReference type="OrthoDB" id="5817230at2759"/>
<dbReference type="Proteomes" id="UP000008549">
    <property type="component" value="Unassembled WGS sequence"/>
</dbReference>
<dbReference type="GO" id="GO:0005737">
    <property type="term" value="C:cytoplasm"/>
    <property type="evidence" value="ECO:0000318"/>
    <property type="project" value="GO_Central"/>
</dbReference>
<dbReference type="GO" id="GO:0030425">
    <property type="term" value="C:dendrite"/>
    <property type="evidence" value="ECO:0007669"/>
    <property type="project" value="UniProtKB-SubCell"/>
</dbReference>
<dbReference type="GO" id="GO:0005834">
    <property type="term" value="C:heterotrimeric G-protein complex"/>
    <property type="evidence" value="ECO:0000318"/>
    <property type="project" value="GO_Central"/>
</dbReference>
<dbReference type="GO" id="GO:0043025">
    <property type="term" value="C:neuronal cell body"/>
    <property type="evidence" value="ECO:0007669"/>
    <property type="project" value="EnsemblMetazoa"/>
</dbReference>
<dbReference type="GO" id="GO:0097730">
    <property type="term" value="C:non-motile cilium"/>
    <property type="evidence" value="ECO:0007669"/>
    <property type="project" value="EnsemblMetazoa"/>
</dbReference>
<dbReference type="GO" id="GO:0001664">
    <property type="term" value="F:G protein-coupled receptor binding"/>
    <property type="evidence" value="ECO:0000318"/>
    <property type="project" value="GO_Central"/>
</dbReference>
<dbReference type="GO" id="GO:0031683">
    <property type="term" value="F:G-protein beta/gamma-subunit complex binding"/>
    <property type="evidence" value="ECO:0000318"/>
    <property type="project" value="GO_Central"/>
</dbReference>
<dbReference type="GO" id="GO:0005525">
    <property type="term" value="F:GTP binding"/>
    <property type="evidence" value="ECO:0007669"/>
    <property type="project" value="UniProtKB-KW"/>
</dbReference>
<dbReference type="GO" id="GO:0003924">
    <property type="term" value="F:GTPase activity"/>
    <property type="evidence" value="ECO:0000318"/>
    <property type="project" value="GO_Central"/>
</dbReference>
<dbReference type="GO" id="GO:0046872">
    <property type="term" value="F:metal ion binding"/>
    <property type="evidence" value="ECO:0007669"/>
    <property type="project" value="UniProtKB-KW"/>
</dbReference>
<dbReference type="GO" id="GO:0031849">
    <property type="term" value="F:olfactory receptor binding"/>
    <property type="evidence" value="ECO:0007669"/>
    <property type="project" value="EnsemblMetazoa"/>
</dbReference>
<dbReference type="GO" id="GO:0007188">
    <property type="term" value="P:adenylate cyclase-modulating G protein-coupled receptor signaling pathway"/>
    <property type="evidence" value="ECO:0000318"/>
    <property type="project" value="GO_Central"/>
</dbReference>
<dbReference type="GO" id="GO:0006935">
    <property type="term" value="P:chemotaxis"/>
    <property type="evidence" value="ECO:0007669"/>
    <property type="project" value="UniProtKB-KW"/>
</dbReference>
<dbReference type="GO" id="GO:0060271">
    <property type="term" value="P:cilium assembly"/>
    <property type="evidence" value="ECO:0007669"/>
    <property type="project" value="EnsemblMetazoa"/>
</dbReference>
<dbReference type="GO" id="GO:0006972">
    <property type="term" value="P:hyperosmotic response"/>
    <property type="evidence" value="ECO:0007669"/>
    <property type="project" value="EnsemblMetazoa"/>
</dbReference>
<dbReference type="GO" id="GO:0042048">
    <property type="term" value="P:olfactory behavior"/>
    <property type="evidence" value="ECO:0007669"/>
    <property type="project" value="EnsemblMetazoa"/>
</dbReference>
<dbReference type="GO" id="GO:1990834">
    <property type="term" value="P:response to odorant"/>
    <property type="evidence" value="ECO:0007669"/>
    <property type="project" value="EnsemblMetazoa"/>
</dbReference>
<dbReference type="GO" id="GO:0007608">
    <property type="term" value="P:sensory perception of smell"/>
    <property type="evidence" value="ECO:0007669"/>
    <property type="project" value="UniProtKB-KW"/>
</dbReference>
<dbReference type="CDD" id="cd00066">
    <property type="entry name" value="G-alpha"/>
    <property type="match status" value="1"/>
</dbReference>
<dbReference type="FunFam" id="1.10.400.10:FF:000011">
    <property type="entry name" value="Guanine nucleotide-binding protein alpha-1 subunit"/>
    <property type="match status" value="1"/>
</dbReference>
<dbReference type="FunFam" id="3.40.50.300:FF:000041">
    <property type="entry name" value="Guanine nucleotide-binding protein G(I) subunit alpha"/>
    <property type="match status" value="1"/>
</dbReference>
<dbReference type="Gene3D" id="1.10.400.10">
    <property type="entry name" value="GI Alpha 1, domain 2-like"/>
    <property type="match status" value="1"/>
</dbReference>
<dbReference type="Gene3D" id="3.40.50.300">
    <property type="entry name" value="P-loop containing nucleotide triphosphate hydrolases"/>
    <property type="match status" value="1"/>
</dbReference>
<dbReference type="InterPro" id="IPR001408">
    <property type="entry name" value="Gprotein_alpha_I"/>
</dbReference>
<dbReference type="InterPro" id="IPR001019">
    <property type="entry name" value="Gprotein_alpha_su"/>
</dbReference>
<dbReference type="InterPro" id="IPR011025">
    <property type="entry name" value="GproteinA_insert"/>
</dbReference>
<dbReference type="InterPro" id="IPR027417">
    <property type="entry name" value="P-loop_NTPase"/>
</dbReference>
<dbReference type="PANTHER" id="PTHR10218">
    <property type="entry name" value="GTP-BINDING PROTEIN ALPHA SUBUNIT"/>
    <property type="match status" value="1"/>
</dbReference>
<dbReference type="PANTHER" id="PTHR10218:SF215">
    <property type="entry name" value="GUANINE NUCLEOTIDE-BINDING PROTEIN ALPHA-17 SUBUNIT"/>
    <property type="match status" value="1"/>
</dbReference>
<dbReference type="Pfam" id="PF00503">
    <property type="entry name" value="G-alpha"/>
    <property type="match status" value="1"/>
</dbReference>
<dbReference type="PRINTS" id="PR00318">
    <property type="entry name" value="GPROTEINA"/>
</dbReference>
<dbReference type="PRINTS" id="PR00441">
    <property type="entry name" value="GPROTEINAI"/>
</dbReference>
<dbReference type="SMART" id="SM00275">
    <property type="entry name" value="G_alpha"/>
    <property type="match status" value="1"/>
</dbReference>
<dbReference type="SUPFAM" id="SSF52540">
    <property type="entry name" value="P-loop containing nucleoside triphosphate hydrolases"/>
    <property type="match status" value="1"/>
</dbReference>
<dbReference type="SUPFAM" id="SSF47895">
    <property type="entry name" value="Transducin (alpha subunit), insertion domain"/>
    <property type="match status" value="1"/>
</dbReference>
<dbReference type="PROSITE" id="PS51882">
    <property type="entry name" value="G_ALPHA"/>
    <property type="match status" value="1"/>
</dbReference>
<evidence type="ECO:0000250" key="1"/>
<evidence type="ECO:0000255" key="2"/>
<evidence type="ECO:0000255" key="3">
    <source>
        <dbReference type="PROSITE-ProRule" id="PRU01230"/>
    </source>
</evidence>
<evidence type="ECO:0000305" key="4"/>